<keyword id="KW-1003">Cell membrane</keyword>
<keyword id="KW-0407">Ion channel</keyword>
<keyword id="KW-0406">Ion transport</keyword>
<keyword id="KW-0472">Membrane</keyword>
<keyword id="KW-0812">Transmembrane</keyword>
<keyword id="KW-1133">Transmembrane helix</keyword>
<keyword id="KW-0813">Transport</keyword>
<proteinExistence type="inferred from homology"/>
<feature type="chain" id="PRO_1000191351" description="Large-conductance mechanosensitive channel">
    <location>
        <begin position="1"/>
        <end position="132"/>
    </location>
</feature>
<feature type="transmembrane region" description="Helical" evidence="1">
    <location>
        <begin position="14"/>
        <end position="34"/>
    </location>
</feature>
<feature type="transmembrane region" description="Helical" evidence="1">
    <location>
        <begin position="67"/>
        <end position="87"/>
    </location>
</feature>
<gene>
    <name evidence="1" type="primary">mscL</name>
    <name type="ordered locus">BCA_4790</name>
</gene>
<name>MSCL_BACC3</name>
<dbReference type="EMBL" id="CP001407">
    <property type="protein sequence ID" value="ACO28541.1"/>
    <property type="molecule type" value="Genomic_DNA"/>
</dbReference>
<dbReference type="RefSeq" id="WP_000267001.1">
    <property type="nucleotide sequence ID" value="NZ_CP009318.1"/>
</dbReference>
<dbReference type="SMR" id="C1EV23"/>
<dbReference type="GeneID" id="45024544"/>
<dbReference type="KEGG" id="bcx:BCA_4790"/>
<dbReference type="PATRIC" id="fig|572264.18.peg.4740"/>
<dbReference type="Proteomes" id="UP000002210">
    <property type="component" value="Chromosome"/>
</dbReference>
<dbReference type="GO" id="GO:0005886">
    <property type="term" value="C:plasma membrane"/>
    <property type="evidence" value="ECO:0007669"/>
    <property type="project" value="UniProtKB-SubCell"/>
</dbReference>
<dbReference type="GO" id="GO:0008381">
    <property type="term" value="F:mechanosensitive monoatomic ion channel activity"/>
    <property type="evidence" value="ECO:0007669"/>
    <property type="project" value="UniProtKB-UniRule"/>
</dbReference>
<dbReference type="FunFam" id="1.10.1200.120:FF:000001">
    <property type="entry name" value="Large-conductance mechanosensitive channel"/>
    <property type="match status" value="1"/>
</dbReference>
<dbReference type="Gene3D" id="1.10.1200.120">
    <property type="entry name" value="Large-conductance mechanosensitive channel, MscL, domain 1"/>
    <property type="match status" value="1"/>
</dbReference>
<dbReference type="HAMAP" id="MF_00115">
    <property type="entry name" value="MscL"/>
    <property type="match status" value="1"/>
</dbReference>
<dbReference type="InterPro" id="IPR019823">
    <property type="entry name" value="Mechanosensitive_channel_CS"/>
</dbReference>
<dbReference type="InterPro" id="IPR001185">
    <property type="entry name" value="MS_channel"/>
</dbReference>
<dbReference type="InterPro" id="IPR037673">
    <property type="entry name" value="MSC/AndL"/>
</dbReference>
<dbReference type="InterPro" id="IPR036019">
    <property type="entry name" value="MscL_channel"/>
</dbReference>
<dbReference type="NCBIfam" id="TIGR00220">
    <property type="entry name" value="mscL"/>
    <property type="match status" value="1"/>
</dbReference>
<dbReference type="NCBIfam" id="NF001843">
    <property type="entry name" value="PRK00567.1-4"/>
    <property type="match status" value="1"/>
</dbReference>
<dbReference type="NCBIfam" id="NF010560">
    <property type="entry name" value="PRK13955.1"/>
    <property type="match status" value="1"/>
</dbReference>
<dbReference type="PANTHER" id="PTHR30266:SF2">
    <property type="entry name" value="LARGE-CONDUCTANCE MECHANOSENSITIVE CHANNEL"/>
    <property type="match status" value="1"/>
</dbReference>
<dbReference type="PANTHER" id="PTHR30266">
    <property type="entry name" value="MECHANOSENSITIVE CHANNEL MSCL"/>
    <property type="match status" value="1"/>
</dbReference>
<dbReference type="Pfam" id="PF01741">
    <property type="entry name" value="MscL"/>
    <property type="match status" value="1"/>
</dbReference>
<dbReference type="PRINTS" id="PR01264">
    <property type="entry name" value="MECHCHANNEL"/>
</dbReference>
<dbReference type="SUPFAM" id="SSF81330">
    <property type="entry name" value="Gated mechanosensitive channel"/>
    <property type="match status" value="1"/>
</dbReference>
<dbReference type="PROSITE" id="PS01327">
    <property type="entry name" value="MSCL"/>
    <property type="match status" value="1"/>
</dbReference>
<reference key="1">
    <citation type="submission" date="2009-02" db="EMBL/GenBank/DDBJ databases">
        <title>Genome sequence of Bacillus cereus 03BB102.</title>
        <authorList>
            <person name="Dodson R.J."/>
            <person name="Jackson P."/>
            <person name="Munk A.C."/>
            <person name="Brettin T."/>
            <person name="Bruce D."/>
            <person name="Detter C."/>
            <person name="Tapia R."/>
            <person name="Han C."/>
            <person name="Sutton G."/>
            <person name="Sims D."/>
        </authorList>
    </citation>
    <scope>NUCLEOTIDE SEQUENCE [LARGE SCALE GENOMIC DNA]</scope>
    <source>
        <strain>03BB102</strain>
    </source>
</reference>
<sequence>MWNEFKKFAFKGNVIDLAVGVVIGAAFGKIVSSLVKDIITPLLGMVLGGVDFTDLKITFGKSSIMYGNFIQTIFDFLIIAAAIFMFVKVFNKLTSKREEEKEEEIPEPTKEEELLGEIRDLLKQQNSSKDRA</sequence>
<accession>C1EV23</accession>
<organism>
    <name type="scientific">Bacillus cereus (strain 03BB102)</name>
    <dbReference type="NCBI Taxonomy" id="572264"/>
    <lineage>
        <taxon>Bacteria</taxon>
        <taxon>Bacillati</taxon>
        <taxon>Bacillota</taxon>
        <taxon>Bacilli</taxon>
        <taxon>Bacillales</taxon>
        <taxon>Bacillaceae</taxon>
        <taxon>Bacillus</taxon>
        <taxon>Bacillus cereus group</taxon>
    </lineage>
</organism>
<protein>
    <recommendedName>
        <fullName evidence="1">Large-conductance mechanosensitive channel</fullName>
    </recommendedName>
</protein>
<comment type="function">
    <text evidence="1">Channel that opens in response to stretch forces in the membrane lipid bilayer. May participate in the regulation of osmotic pressure changes within the cell.</text>
</comment>
<comment type="subunit">
    <text evidence="1">Homopentamer.</text>
</comment>
<comment type="subcellular location">
    <subcellularLocation>
        <location evidence="1">Cell membrane</location>
        <topology evidence="1">Multi-pass membrane protein</topology>
    </subcellularLocation>
</comment>
<comment type="similarity">
    <text evidence="1">Belongs to the MscL family.</text>
</comment>
<evidence type="ECO:0000255" key="1">
    <source>
        <dbReference type="HAMAP-Rule" id="MF_00115"/>
    </source>
</evidence>